<dbReference type="EMBL" id="AM889285">
    <property type="protein sequence ID" value="CAP57276.1"/>
    <property type="molecule type" value="Genomic_DNA"/>
</dbReference>
<dbReference type="EMBL" id="CP001189">
    <property type="protein sequence ID" value="ACI52768.1"/>
    <property type="molecule type" value="Genomic_DNA"/>
</dbReference>
<dbReference type="RefSeq" id="WP_012227816.1">
    <property type="nucleotide sequence ID" value="NC_010125.1"/>
</dbReference>
<dbReference type="SMR" id="A9H1N0"/>
<dbReference type="STRING" id="272568.GDI3333"/>
<dbReference type="KEGG" id="gdi:GDI3333"/>
<dbReference type="KEGG" id="gdj:Gdia_3038"/>
<dbReference type="eggNOG" id="COG0360">
    <property type="taxonomic scope" value="Bacteria"/>
</dbReference>
<dbReference type="HOGENOM" id="CLU_113441_2_0_5"/>
<dbReference type="OrthoDB" id="9812702at2"/>
<dbReference type="Proteomes" id="UP000001176">
    <property type="component" value="Chromosome"/>
</dbReference>
<dbReference type="GO" id="GO:0022627">
    <property type="term" value="C:cytosolic small ribosomal subunit"/>
    <property type="evidence" value="ECO:0007669"/>
    <property type="project" value="TreeGrafter"/>
</dbReference>
<dbReference type="GO" id="GO:0070181">
    <property type="term" value="F:small ribosomal subunit rRNA binding"/>
    <property type="evidence" value="ECO:0007669"/>
    <property type="project" value="TreeGrafter"/>
</dbReference>
<dbReference type="GO" id="GO:0003735">
    <property type="term" value="F:structural constituent of ribosome"/>
    <property type="evidence" value="ECO:0007669"/>
    <property type="project" value="InterPro"/>
</dbReference>
<dbReference type="GO" id="GO:0006412">
    <property type="term" value="P:translation"/>
    <property type="evidence" value="ECO:0007669"/>
    <property type="project" value="UniProtKB-UniRule"/>
</dbReference>
<dbReference type="CDD" id="cd00473">
    <property type="entry name" value="bS6"/>
    <property type="match status" value="1"/>
</dbReference>
<dbReference type="Gene3D" id="3.30.70.60">
    <property type="match status" value="1"/>
</dbReference>
<dbReference type="HAMAP" id="MF_00360">
    <property type="entry name" value="Ribosomal_bS6"/>
    <property type="match status" value="1"/>
</dbReference>
<dbReference type="InterPro" id="IPR000529">
    <property type="entry name" value="Ribosomal_bS6"/>
</dbReference>
<dbReference type="InterPro" id="IPR035980">
    <property type="entry name" value="Ribosomal_bS6_sf"/>
</dbReference>
<dbReference type="InterPro" id="IPR020814">
    <property type="entry name" value="Ribosomal_S6_plastid/chlpt"/>
</dbReference>
<dbReference type="InterPro" id="IPR014717">
    <property type="entry name" value="Transl_elong_EF1B/ribsomal_bS6"/>
</dbReference>
<dbReference type="NCBIfam" id="TIGR00166">
    <property type="entry name" value="S6"/>
    <property type="match status" value="1"/>
</dbReference>
<dbReference type="PANTHER" id="PTHR21011">
    <property type="entry name" value="MITOCHONDRIAL 28S RIBOSOMAL PROTEIN S6"/>
    <property type="match status" value="1"/>
</dbReference>
<dbReference type="PANTHER" id="PTHR21011:SF1">
    <property type="entry name" value="SMALL RIBOSOMAL SUBUNIT PROTEIN BS6M"/>
    <property type="match status" value="1"/>
</dbReference>
<dbReference type="Pfam" id="PF01250">
    <property type="entry name" value="Ribosomal_S6"/>
    <property type="match status" value="1"/>
</dbReference>
<dbReference type="SUPFAM" id="SSF54995">
    <property type="entry name" value="Ribosomal protein S6"/>
    <property type="match status" value="1"/>
</dbReference>
<accession>A9H1N0</accession>
<accession>B5ZIX8</accession>
<gene>
    <name evidence="1" type="primary">rpsF</name>
    <name type="ordered locus">GDI3333</name>
    <name type="ordered locus">Gdia_3038</name>
</gene>
<organism>
    <name type="scientific">Gluconacetobacter diazotrophicus (strain ATCC 49037 / DSM 5601 / CCUG 37298 / CIP 103539 / LMG 7603 / PAl5)</name>
    <dbReference type="NCBI Taxonomy" id="272568"/>
    <lineage>
        <taxon>Bacteria</taxon>
        <taxon>Pseudomonadati</taxon>
        <taxon>Pseudomonadota</taxon>
        <taxon>Alphaproteobacteria</taxon>
        <taxon>Acetobacterales</taxon>
        <taxon>Acetobacteraceae</taxon>
        <taxon>Gluconacetobacter</taxon>
    </lineage>
</organism>
<keyword id="KW-1185">Reference proteome</keyword>
<keyword id="KW-0687">Ribonucleoprotein</keyword>
<keyword id="KW-0689">Ribosomal protein</keyword>
<keyword id="KW-0694">RNA-binding</keyword>
<keyword id="KW-0699">rRNA-binding</keyword>
<feature type="chain" id="PRO_1000079449" description="Small ribosomal subunit protein bS6">
    <location>
        <begin position="1"/>
        <end position="161"/>
    </location>
</feature>
<feature type="region of interest" description="Disordered" evidence="2">
    <location>
        <begin position="107"/>
        <end position="161"/>
    </location>
</feature>
<feature type="compositionally biased region" description="Basic and acidic residues" evidence="2">
    <location>
        <begin position="136"/>
        <end position="161"/>
    </location>
</feature>
<name>RS6_GLUDA</name>
<protein>
    <recommendedName>
        <fullName evidence="1">Small ribosomal subunit protein bS6</fullName>
    </recommendedName>
    <alternativeName>
        <fullName evidence="3">30S ribosomal protein S6</fullName>
    </alternativeName>
</protein>
<comment type="function">
    <text evidence="1">Binds together with bS18 to 16S ribosomal RNA.</text>
</comment>
<comment type="similarity">
    <text evidence="1">Belongs to the bacterial ribosomal protein bS6 family.</text>
</comment>
<evidence type="ECO:0000255" key="1">
    <source>
        <dbReference type="HAMAP-Rule" id="MF_00360"/>
    </source>
</evidence>
<evidence type="ECO:0000256" key="2">
    <source>
        <dbReference type="SAM" id="MobiDB-lite"/>
    </source>
</evidence>
<evidence type="ECO:0000305" key="3"/>
<reference key="1">
    <citation type="journal article" date="2009" name="BMC Genomics">
        <title>Complete genome sequence of the sugarcane nitrogen-fixing endophyte Gluconacetobacter diazotrophicus Pal5.</title>
        <authorList>
            <person name="Bertalan M."/>
            <person name="Albano R."/>
            <person name="de Padua V."/>
            <person name="Rouws L."/>
            <person name="Rojas C."/>
            <person name="Hemerly A."/>
            <person name="Teixeira K."/>
            <person name="Schwab S."/>
            <person name="Araujo J."/>
            <person name="Oliveira A."/>
            <person name="Franca L."/>
            <person name="Magalhaes V."/>
            <person name="Alqueres S."/>
            <person name="Cardoso A."/>
            <person name="Almeida W."/>
            <person name="Loureiro M.M."/>
            <person name="Nogueira E."/>
            <person name="Cidade D."/>
            <person name="Oliveira D."/>
            <person name="Simao T."/>
            <person name="Macedo J."/>
            <person name="Valadao A."/>
            <person name="Dreschsel M."/>
            <person name="Freitas F."/>
            <person name="Vidal M."/>
            <person name="Guedes H."/>
            <person name="Rodrigues E."/>
            <person name="Meneses C."/>
            <person name="Brioso P."/>
            <person name="Pozzer L."/>
            <person name="Figueiredo D."/>
            <person name="Montano H."/>
            <person name="Junior J."/>
            <person name="de Souza Filho G."/>
            <person name="Martin Quintana Flores V."/>
            <person name="Ferreira B."/>
            <person name="Branco A."/>
            <person name="Gonzalez P."/>
            <person name="Guillobel H."/>
            <person name="Lemos M."/>
            <person name="Seibel L."/>
            <person name="Macedo J."/>
            <person name="Alves-Ferreira M."/>
            <person name="Sachetto-Martins G."/>
            <person name="Coelho A."/>
            <person name="Santos E."/>
            <person name="Amaral G."/>
            <person name="Neves A."/>
            <person name="Pacheco A.B."/>
            <person name="Carvalho D."/>
            <person name="Lery L."/>
            <person name="Bisch P."/>
            <person name="Rossle S.C."/>
            <person name="Urmenyi T."/>
            <person name="Rael Pereira A."/>
            <person name="Silva R."/>
            <person name="Rondinelli E."/>
            <person name="von Kruger W."/>
            <person name="Martins O."/>
            <person name="Baldani J.I."/>
            <person name="Ferreira P.C."/>
        </authorList>
    </citation>
    <scope>NUCLEOTIDE SEQUENCE [LARGE SCALE GENOMIC DNA]</scope>
    <source>
        <strain>ATCC 49037 / DSM 5601 / CCUG 37298 / CIP 103539 / LMG 7603 / PAl5</strain>
    </source>
</reference>
<reference key="2">
    <citation type="journal article" date="2010" name="Stand. Genomic Sci.">
        <title>Two genome sequences of the same bacterial strain, Gluconacetobacter diazotrophicus PAl 5, suggest a new standard in genome sequence submission.</title>
        <authorList>
            <person name="Giongo A."/>
            <person name="Tyler H.L."/>
            <person name="Zipperer U.N."/>
            <person name="Triplett E.W."/>
        </authorList>
    </citation>
    <scope>NUCLEOTIDE SEQUENCE [LARGE SCALE GENOMIC DNA]</scope>
    <source>
        <strain>ATCC 49037 / DSM 5601 / CCUG 37298 / CIP 103539 / LMG 7603 / PAl5</strain>
    </source>
</reference>
<sequence length="161" mass="18152">MPLYETVFIARNDVSQQQVEAVADGIAALLETDGGAVKKREYWGLRSLAYRIKKNRKGHYMLLGLDAKPETIKEIERQLGLNEDVMRVLTLRVDEIDEAPSVILSRKGDERERGFRGPKPAGRFESGRGGAGGARRGYDDREEFRARNEREDGRDTDGEAE</sequence>
<proteinExistence type="inferred from homology"/>